<organism>
    <name type="scientific">Mus musculus</name>
    <name type="common">Mouse</name>
    <dbReference type="NCBI Taxonomy" id="10090"/>
    <lineage>
        <taxon>Eukaryota</taxon>
        <taxon>Metazoa</taxon>
        <taxon>Chordata</taxon>
        <taxon>Craniata</taxon>
        <taxon>Vertebrata</taxon>
        <taxon>Euteleostomi</taxon>
        <taxon>Mammalia</taxon>
        <taxon>Eutheria</taxon>
        <taxon>Euarchontoglires</taxon>
        <taxon>Glires</taxon>
        <taxon>Rodentia</taxon>
        <taxon>Myomorpha</taxon>
        <taxon>Muroidea</taxon>
        <taxon>Muridae</taxon>
        <taxon>Murinae</taxon>
        <taxon>Mus</taxon>
        <taxon>Mus</taxon>
    </lineage>
</organism>
<name>CA210_MOUSE</name>
<comment type="function">
    <text evidence="4">May be involved in membrane trafficking between endosomes and plasma membrane.</text>
</comment>
<comment type="subcellular location">
    <subcellularLocation>
        <location evidence="5">Membrane</location>
        <topology evidence="5">Single-pass type III membrane protein</topology>
    </subcellularLocation>
    <subcellularLocation>
        <location evidence="3">Early endosome</location>
    </subcellularLocation>
    <subcellularLocation>
        <location evidence="3">Recycling endosome</location>
    </subcellularLocation>
    <subcellularLocation>
        <location evidence="4">Cell membrane</location>
    </subcellularLocation>
    <text evidence="3">Also localizes to tubular endosome structures.</text>
</comment>
<comment type="tissue specificity">
    <text evidence="3">Expressed in stomach, kidney, large and small intestine and kidney.</text>
</comment>
<accession>Q9CQM1</accession>
<proteinExistence type="evidence at protein level"/>
<feature type="chain" id="PRO_0000271011" description="Type III endosome membrane protein TEMP">
    <location>
        <begin position="1"/>
        <end position="111"/>
    </location>
</feature>
<feature type="topological domain" description="Extracellular" evidence="4">
    <location>
        <begin position="1"/>
        <end position="27"/>
    </location>
</feature>
<feature type="transmembrane region" description="Helical; Signal-anchor for type III membrane protein" evidence="1">
    <location>
        <begin position="28"/>
        <end position="48"/>
    </location>
</feature>
<feature type="topological domain" description="Cytoplasmic" evidence="1">
    <location>
        <begin position="49"/>
        <end position="111"/>
    </location>
</feature>
<feature type="region of interest" description="Disordered" evidence="2">
    <location>
        <begin position="64"/>
        <end position="111"/>
    </location>
</feature>
<feature type="compositionally biased region" description="Acidic residues" evidence="2">
    <location>
        <begin position="79"/>
        <end position="88"/>
    </location>
</feature>
<feature type="glycosylation site" description="N-linked (GlcNAc...) asparagine" evidence="1">
    <location>
        <position position="5"/>
    </location>
</feature>
<dbReference type="EMBL" id="AK009128">
    <property type="protein sequence ID" value="BAB26091.1"/>
    <property type="molecule type" value="mRNA"/>
</dbReference>
<dbReference type="EMBL" id="AK012175">
    <property type="protein sequence ID" value="BAB28079.1"/>
    <property type="molecule type" value="mRNA"/>
</dbReference>
<dbReference type="EMBL" id="AK147115">
    <property type="protein sequence ID" value="BAE27687.1"/>
    <property type="molecule type" value="mRNA"/>
</dbReference>
<dbReference type="EMBL" id="BC022764">
    <property type="protein sequence ID" value="AAH22764.1"/>
    <property type="molecule type" value="mRNA"/>
</dbReference>
<dbReference type="CCDS" id="CCDS18554.1"/>
<dbReference type="RefSeq" id="NP_001406007.1">
    <property type="nucleotide sequence ID" value="NM_001419078.1"/>
</dbReference>
<dbReference type="RefSeq" id="NP_079848.1">
    <property type="nucleotide sequence ID" value="NM_025572.3"/>
</dbReference>
<dbReference type="RefSeq" id="XP_006503335.1">
    <property type="nucleotide sequence ID" value="XM_006503272.2"/>
</dbReference>
<dbReference type="SMR" id="Q9CQM1"/>
<dbReference type="FunCoup" id="Q9CQM1">
    <property type="interactions" value="13"/>
</dbReference>
<dbReference type="STRING" id="10090.ENSMUSP00000030261"/>
<dbReference type="GlyGen" id="Q9CQM1">
    <property type="glycosylation" value="1 site"/>
</dbReference>
<dbReference type="PhosphoSitePlus" id="Q9CQM1"/>
<dbReference type="PaxDb" id="10090-ENSMUSP00000030261"/>
<dbReference type="Antibodypedia" id="52415">
    <property type="antibodies" value="42 antibodies from 11 providers"/>
</dbReference>
<dbReference type="Ensembl" id="ENSMUST00000030261.6">
    <property type="protein sequence ID" value="ENSMUSP00000030261.6"/>
    <property type="gene ID" value="ENSMUSG00000028536.13"/>
</dbReference>
<dbReference type="Ensembl" id="ENSMUST00000106367.8">
    <property type="protein sequence ID" value="ENSMUSP00000101975.2"/>
    <property type="gene ID" value="ENSMUSG00000028536.13"/>
</dbReference>
<dbReference type="GeneID" id="66451"/>
<dbReference type="KEGG" id="mmu:66451"/>
<dbReference type="UCSC" id="uc008ukj.1">
    <property type="organism name" value="mouse"/>
</dbReference>
<dbReference type="AGR" id="MGI:1913701"/>
<dbReference type="MGI" id="MGI:1913701">
    <property type="gene designation" value="2610528J11Rik"/>
</dbReference>
<dbReference type="VEuPathDB" id="HostDB:ENSMUSG00000028536"/>
<dbReference type="eggNOG" id="ENOG502S614">
    <property type="taxonomic scope" value="Eukaryota"/>
</dbReference>
<dbReference type="GeneTree" id="ENSGT00510000048988"/>
<dbReference type="HOGENOM" id="CLU_2157591_0_0_1"/>
<dbReference type="InParanoid" id="Q9CQM1"/>
<dbReference type="OMA" id="HRYRASY"/>
<dbReference type="OrthoDB" id="676979at2759"/>
<dbReference type="PhylomeDB" id="Q9CQM1"/>
<dbReference type="TreeFam" id="TF338695"/>
<dbReference type="BioGRID-ORCS" id="66451">
    <property type="hits" value="1 hit in 76 CRISPR screens"/>
</dbReference>
<dbReference type="PRO" id="PR:Q9CQM1"/>
<dbReference type="Proteomes" id="UP000000589">
    <property type="component" value="Chromosome 4"/>
</dbReference>
<dbReference type="RNAct" id="Q9CQM1">
    <property type="molecule type" value="protein"/>
</dbReference>
<dbReference type="Bgee" id="ENSMUSG00000028536">
    <property type="expression patterns" value="Expressed in yolk sac and 101 other cell types or tissues"/>
</dbReference>
<dbReference type="GO" id="GO:0005769">
    <property type="term" value="C:early endosome"/>
    <property type="evidence" value="ECO:0007669"/>
    <property type="project" value="UniProtKB-SubCell"/>
</dbReference>
<dbReference type="GO" id="GO:0005886">
    <property type="term" value="C:plasma membrane"/>
    <property type="evidence" value="ECO:0007669"/>
    <property type="project" value="UniProtKB-SubCell"/>
</dbReference>
<dbReference type="GO" id="GO:0055037">
    <property type="term" value="C:recycling endosome"/>
    <property type="evidence" value="ECO:0007669"/>
    <property type="project" value="UniProtKB-SubCell"/>
</dbReference>
<dbReference type="PANTHER" id="PTHR31450">
    <property type="entry name" value="LEUCINE-RICH REPEAT-CONTAINING PROTEIN 19 LRRC19 FAMILY MEMBER"/>
    <property type="match status" value="1"/>
</dbReference>
<dbReference type="PANTHER" id="PTHR31450:SF3">
    <property type="entry name" value="TYPE III ENDOSOME MEMBRANE PROTEIN TEMP"/>
    <property type="match status" value="1"/>
</dbReference>
<dbReference type="Pfam" id="PF15176">
    <property type="entry name" value="LRR19-TM"/>
    <property type="match status" value="1"/>
</dbReference>
<evidence type="ECO:0000255" key="1"/>
<evidence type="ECO:0000256" key="2">
    <source>
        <dbReference type="SAM" id="MobiDB-lite"/>
    </source>
</evidence>
<evidence type="ECO:0000269" key="3">
    <source>
    </source>
</evidence>
<evidence type="ECO:0000303" key="4">
    <source>
    </source>
</evidence>
<evidence type="ECO:0000305" key="5"/>
<protein>
    <recommendedName>
        <fullName evidence="4">Type III endosome membrane protein TEMP</fullName>
        <shortName evidence="4">TEMP</shortName>
    </recommendedName>
</protein>
<keyword id="KW-1003">Cell membrane</keyword>
<keyword id="KW-0967">Endosome</keyword>
<keyword id="KW-0325">Glycoprotein</keyword>
<keyword id="KW-0472">Membrane</keyword>
<keyword id="KW-1185">Reference proteome</keyword>
<keyword id="KW-0735">Signal-anchor</keyword>
<keyword id="KW-0812">Transmembrane</keyword>
<keyword id="KW-1133">Transmembrane helix</keyword>
<sequence>MIGGNTTIISGAINASTEAPGLGTGGRAWPVLVGVVLGAVVLSILIALAAKCHLCRRYHASYRHRPLSSAGGGNRPPVGEDEDDDGFIEDNYIQPGAGEMETTGSRDHFSL</sequence>
<reference key="1">
    <citation type="journal article" date="2005" name="Science">
        <title>The transcriptional landscape of the mammalian genome.</title>
        <authorList>
            <person name="Carninci P."/>
            <person name="Kasukawa T."/>
            <person name="Katayama S."/>
            <person name="Gough J."/>
            <person name="Frith M.C."/>
            <person name="Maeda N."/>
            <person name="Oyama R."/>
            <person name="Ravasi T."/>
            <person name="Lenhard B."/>
            <person name="Wells C."/>
            <person name="Kodzius R."/>
            <person name="Shimokawa K."/>
            <person name="Bajic V.B."/>
            <person name="Brenner S.E."/>
            <person name="Batalov S."/>
            <person name="Forrest A.R."/>
            <person name="Zavolan M."/>
            <person name="Davis M.J."/>
            <person name="Wilming L.G."/>
            <person name="Aidinis V."/>
            <person name="Allen J.E."/>
            <person name="Ambesi-Impiombato A."/>
            <person name="Apweiler R."/>
            <person name="Aturaliya R.N."/>
            <person name="Bailey T.L."/>
            <person name="Bansal M."/>
            <person name="Baxter L."/>
            <person name="Beisel K.W."/>
            <person name="Bersano T."/>
            <person name="Bono H."/>
            <person name="Chalk A.M."/>
            <person name="Chiu K.P."/>
            <person name="Choudhary V."/>
            <person name="Christoffels A."/>
            <person name="Clutterbuck D.R."/>
            <person name="Crowe M.L."/>
            <person name="Dalla E."/>
            <person name="Dalrymple B.P."/>
            <person name="de Bono B."/>
            <person name="Della Gatta G."/>
            <person name="di Bernardo D."/>
            <person name="Down T."/>
            <person name="Engstrom P."/>
            <person name="Fagiolini M."/>
            <person name="Faulkner G."/>
            <person name="Fletcher C.F."/>
            <person name="Fukushima T."/>
            <person name="Furuno M."/>
            <person name="Futaki S."/>
            <person name="Gariboldi M."/>
            <person name="Georgii-Hemming P."/>
            <person name="Gingeras T.R."/>
            <person name="Gojobori T."/>
            <person name="Green R.E."/>
            <person name="Gustincich S."/>
            <person name="Harbers M."/>
            <person name="Hayashi Y."/>
            <person name="Hensch T.K."/>
            <person name="Hirokawa N."/>
            <person name="Hill D."/>
            <person name="Huminiecki L."/>
            <person name="Iacono M."/>
            <person name="Ikeo K."/>
            <person name="Iwama A."/>
            <person name="Ishikawa T."/>
            <person name="Jakt M."/>
            <person name="Kanapin A."/>
            <person name="Katoh M."/>
            <person name="Kawasawa Y."/>
            <person name="Kelso J."/>
            <person name="Kitamura H."/>
            <person name="Kitano H."/>
            <person name="Kollias G."/>
            <person name="Krishnan S.P."/>
            <person name="Kruger A."/>
            <person name="Kummerfeld S.K."/>
            <person name="Kurochkin I.V."/>
            <person name="Lareau L.F."/>
            <person name="Lazarevic D."/>
            <person name="Lipovich L."/>
            <person name="Liu J."/>
            <person name="Liuni S."/>
            <person name="McWilliam S."/>
            <person name="Madan Babu M."/>
            <person name="Madera M."/>
            <person name="Marchionni L."/>
            <person name="Matsuda H."/>
            <person name="Matsuzawa S."/>
            <person name="Miki H."/>
            <person name="Mignone F."/>
            <person name="Miyake S."/>
            <person name="Morris K."/>
            <person name="Mottagui-Tabar S."/>
            <person name="Mulder N."/>
            <person name="Nakano N."/>
            <person name="Nakauchi H."/>
            <person name="Ng P."/>
            <person name="Nilsson R."/>
            <person name="Nishiguchi S."/>
            <person name="Nishikawa S."/>
            <person name="Nori F."/>
            <person name="Ohara O."/>
            <person name="Okazaki Y."/>
            <person name="Orlando V."/>
            <person name="Pang K.C."/>
            <person name="Pavan W.J."/>
            <person name="Pavesi G."/>
            <person name="Pesole G."/>
            <person name="Petrovsky N."/>
            <person name="Piazza S."/>
            <person name="Reed J."/>
            <person name="Reid J.F."/>
            <person name="Ring B.Z."/>
            <person name="Ringwald M."/>
            <person name="Rost B."/>
            <person name="Ruan Y."/>
            <person name="Salzberg S.L."/>
            <person name="Sandelin A."/>
            <person name="Schneider C."/>
            <person name="Schoenbach C."/>
            <person name="Sekiguchi K."/>
            <person name="Semple C.A."/>
            <person name="Seno S."/>
            <person name="Sessa L."/>
            <person name="Sheng Y."/>
            <person name="Shibata Y."/>
            <person name="Shimada H."/>
            <person name="Shimada K."/>
            <person name="Silva D."/>
            <person name="Sinclair B."/>
            <person name="Sperling S."/>
            <person name="Stupka E."/>
            <person name="Sugiura K."/>
            <person name="Sultana R."/>
            <person name="Takenaka Y."/>
            <person name="Taki K."/>
            <person name="Tammoja K."/>
            <person name="Tan S.L."/>
            <person name="Tang S."/>
            <person name="Taylor M.S."/>
            <person name="Tegner J."/>
            <person name="Teichmann S.A."/>
            <person name="Ueda H.R."/>
            <person name="van Nimwegen E."/>
            <person name="Verardo R."/>
            <person name="Wei C.L."/>
            <person name="Yagi K."/>
            <person name="Yamanishi H."/>
            <person name="Zabarovsky E."/>
            <person name="Zhu S."/>
            <person name="Zimmer A."/>
            <person name="Hide W."/>
            <person name="Bult C."/>
            <person name="Grimmond S.M."/>
            <person name="Teasdale R.D."/>
            <person name="Liu E.T."/>
            <person name="Brusic V."/>
            <person name="Quackenbush J."/>
            <person name="Wahlestedt C."/>
            <person name="Mattick J.S."/>
            <person name="Hume D.A."/>
            <person name="Kai C."/>
            <person name="Sasaki D."/>
            <person name="Tomaru Y."/>
            <person name="Fukuda S."/>
            <person name="Kanamori-Katayama M."/>
            <person name="Suzuki M."/>
            <person name="Aoki J."/>
            <person name="Arakawa T."/>
            <person name="Iida J."/>
            <person name="Imamura K."/>
            <person name="Itoh M."/>
            <person name="Kato T."/>
            <person name="Kawaji H."/>
            <person name="Kawagashira N."/>
            <person name="Kawashima T."/>
            <person name="Kojima M."/>
            <person name="Kondo S."/>
            <person name="Konno H."/>
            <person name="Nakano K."/>
            <person name="Ninomiya N."/>
            <person name="Nishio T."/>
            <person name="Okada M."/>
            <person name="Plessy C."/>
            <person name="Shibata K."/>
            <person name="Shiraki T."/>
            <person name="Suzuki S."/>
            <person name="Tagami M."/>
            <person name="Waki K."/>
            <person name="Watahiki A."/>
            <person name="Okamura-Oho Y."/>
            <person name="Suzuki H."/>
            <person name="Kawai J."/>
            <person name="Hayashizaki Y."/>
        </authorList>
    </citation>
    <scope>NUCLEOTIDE SEQUENCE [LARGE SCALE MRNA]</scope>
    <source>
        <strain>C57BL/6J</strain>
        <tissue>Amnion</tissue>
        <tissue>Embryo</tissue>
        <tissue>Tongue</tissue>
    </source>
</reference>
<reference key="2">
    <citation type="journal article" date="2004" name="Genome Res.">
        <title>The status, quality, and expansion of the NIH full-length cDNA project: the Mammalian Gene Collection (MGC).</title>
        <authorList>
            <consortium name="The MGC Project Team"/>
        </authorList>
    </citation>
    <scope>NUCLEOTIDE SEQUENCE [LARGE SCALE MRNA]</scope>
    <source>
        <strain>FVB/N</strain>
        <tissue>Salivary gland</tissue>
    </source>
</reference>
<reference key="3">
    <citation type="journal article" date="2012" name="Cells">
        <title>A novel type III endosome transmembrane protein, TEMP.</title>
        <authorList>
            <person name="Aturaliya R.N."/>
            <person name="Kerr M.C."/>
            <person name="Teasdale R.D."/>
        </authorList>
    </citation>
    <scope>SUBCELLULAR LOCATION</scope>
    <scope>TISSUE SPECIFICITY</scope>
    <scope>TOPOLOGY</scope>
    <scope>FUNCTION</scope>
</reference>